<sequence length="441" mass="49581">MSKVTPQPKIGFVSLGCPKNLVDSERILTELRTEGYDVVPSYDDADMVIVNTCGFIDSAVQESLEAIGEALNENGKVIVTGCLGAKEDQIREVHPKVLEITGPHSYEQVLEHVHHYVPKPKHNPFLSLVPEQGVKLTPRHYAYLKISEGCNHRCTFCIIPSMRGDLVSRPIGEVLSEAKRLVDAGVKEILVISQDTSAYGVDVKHRTGFHNGEPVKTSMVSLCEQLSKLGIWTRLHYVYPYPHVDDVIPLMAEGKILPYLDIPLQHASPRILKLMKRPGSVDRQLARIKQWRKICPELTLRSTFIVGFPGETEEDFQMLLDFLKEARLDRVGCFKYSPVEGADANALPDQVPEEVKEERWNRFMQLQQQISAERLQEKVGREILVIIDEVDEEGAIGRSMADAPEIDGAVYLNGETNVKPGDILRVKVEHADEYDLWGSRV</sequence>
<gene>
    <name evidence="1" type="primary">rimO</name>
    <name type="ordered locus">ECED1_0799</name>
</gene>
<evidence type="ECO:0000255" key="1">
    <source>
        <dbReference type="HAMAP-Rule" id="MF_01865"/>
    </source>
</evidence>
<evidence type="ECO:0000255" key="2">
    <source>
        <dbReference type="PROSITE-ProRule" id="PRU01266"/>
    </source>
</evidence>
<protein>
    <recommendedName>
        <fullName evidence="1">Ribosomal protein uS12 methylthiotransferase RimO</fullName>
        <shortName evidence="1">uS12 MTTase</shortName>
        <shortName evidence="1">uS12 methylthiotransferase</shortName>
        <ecNumber evidence="1">2.8.4.4</ecNumber>
    </recommendedName>
    <alternativeName>
        <fullName evidence="1">Ribosomal protein uS12 (aspartate-C(3))-methylthiotransferase</fullName>
    </alternativeName>
    <alternativeName>
        <fullName evidence="1">Ribosome maturation factor RimO</fullName>
    </alternativeName>
</protein>
<organism>
    <name type="scientific">Escherichia coli O81 (strain ED1a)</name>
    <dbReference type="NCBI Taxonomy" id="585397"/>
    <lineage>
        <taxon>Bacteria</taxon>
        <taxon>Pseudomonadati</taxon>
        <taxon>Pseudomonadota</taxon>
        <taxon>Gammaproteobacteria</taxon>
        <taxon>Enterobacterales</taxon>
        <taxon>Enterobacteriaceae</taxon>
        <taxon>Escherichia</taxon>
    </lineage>
</organism>
<name>RIMO_ECO81</name>
<dbReference type="EC" id="2.8.4.4" evidence="1"/>
<dbReference type="EMBL" id="CU928162">
    <property type="protein sequence ID" value="CAR07004.1"/>
    <property type="molecule type" value="Genomic_DNA"/>
</dbReference>
<dbReference type="RefSeq" id="WP_000049378.1">
    <property type="nucleotide sequence ID" value="NC_011745.1"/>
</dbReference>
<dbReference type="SMR" id="B7MQT8"/>
<dbReference type="KEGG" id="ecq:ECED1_0799"/>
<dbReference type="HOGENOM" id="CLU_018697_0_0_6"/>
<dbReference type="Proteomes" id="UP000000748">
    <property type="component" value="Chromosome"/>
</dbReference>
<dbReference type="GO" id="GO:0005829">
    <property type="term" value="C:cytosol"/>
    <property type="evidence" value="ECO:0007669"/>
    <property type="project" value="TreeGrafter"/>
</dbReference>
<dbReference type="GO" id="GO:0051539">
    <property type="term" value="F:4 iron, 4 sulfur cluster binding"/>
    <property type="evidence" value="ECO:0007669"/>
    <property type="project" value="UniProtKB-UniRule"/>
</dbReference>
<dbReference type="GO" id="GO:0035599">
    <property type="term" value="F:aspartic acid methylthiotransferase activity"/>
    <property type="evidence" value="ECO:0007669"/>
    <property type="project" value="TreeGrafter"/>
</dbReference>
<dbReference type="GO" id="GO:0046872">
    <property type="term" value="F:metal ion binding"/>
    <property type="evidence" value="ECO:0007669"/>
    <property type="project" value="UniProtKB-KW"/>
</dbReference>
<dbReference type="GO" id="GO:0103039">
    <property type="term" value="F:protein methylthiotransferase activity"/>
    <property type="evidence" value="ECO:0007669"/>
    <property type="project" value="UniProtKB-EC"/>
</dbReference>
<dbReference type="GO" id="GO:0006400">
    <property type="term" value="P:tRNA modification"/>
    <property type="evidence" value="ECO:0007669"/>
    <property type="project" value="InterPro"/>
</dbReference>
<dbReference type="CDD" id="cd01335">
    <property type="entry name" value="Radical_SAM"/>
    <property type="match status" value="1"/>
</dbReference>
<dbReference type="FunFam" id="2.40.50.140:FF:000060">
    <property type="entry name" value="Ribosomal protein S12 methylthiotransferase RimO"/>
    <property type="match status" value="1"/>
</dbReference>
<dbReference type="FunFam" id="3.40.50.12160:FF:000002">
    <property type="entry name" value="Ribosomal protein S12 methylthiotransferase RimO"/>
    <property type="match status" value="1"/>
</dbReference>
<dbReference type="FunFam" id="3.80.30.20:FF:000001">
    <property type="entry name" value="tRNA-2-methylthio-N(6)-dimethylallyladenosine synthase 2"/>
    <property type="match status" value="1"/>
</dbReference>
<dbReference type="Gene3D" id="3.40.50.12160">
    <property type="entry name" value="Methylthiotransferase, N-terminal domain"/>
    <property type="match status" value="1"/>
</dbReference>
<dbReference type="Gene3D" id="2.40.50.140">
    <property type="entry name" value="Nucleic acid-binding proteins"/>
    <property type="match status" value="1"/>
</dbReference>
<dbReference type="Gene3D" id="3.80.30.20">
    <property type="entry name" value="tm_1862 like domain"/>
    <property type="match status" value="1"/>
</dbReference>
<dbReference type="HAMAP" id="MF_01865">
    <property type="entry name" value="MTTase_RimO"/>
    <property type="match status" value="1"/>
</dbReference>
<dbReference type="InterPro" id="IPR006638">
    <property type="entry name" value="Elp3/MiaA/NifB-like_rSAM"/>
</dbReference>
<dbReference type="InterPro" id="IPR005839">
    <property type="entry name" value="Methylthiotransferase"/>
</dbReference>
<dbReference type="InterPro" id="IPR020612">
    <property type="entry name" value="Methylthiotransferase_CS"/>
</dbReference>
<dbReference type="InterPro" id="IPR013848">
    <property type="entry name" value="Methylthiotransferase_N"/>
</dbReference>
<dbReference type="InterPro" id="IPR038135">
    <property type="entry name" value="Methylthiotransferase_N_sf"/>
</dbReference>
<dbReference type="InterPro" id="IPR012340">
    <property type="entry name" value="NA-bd_OB-fold"/>
</dbReference>
<dbReference type="InterPro" id="IPR005840">
    <property type="entry name" value="Ribosomal_uS12_MeSTrfase_RimO"/>
</dbReference>
<dbReference type="InterPro" id="IPR007197">
    <property type="entry name" value="rSAM"/>
</dbReference>
<dbReference type="InterPro" id="IPR023404">
    <property type="entry name" value="rSAM_horseshoe"/>
</dbReference>
<dbReference type="InterPro" id="IPR002792">
    <property type="entry name" value="TRAM_dom"/>
</dbReference>
<dbReference type="NCBIfam" id="TIGR01125">
    <property type="entry name" value="30S ribosomal protein S12 methylthiotransferase RimO"/>
    <property type="match status" value="1"/>
</dbReference>
<dbReference type="NCBIfam" id="TIGR00089">
    <property type="entry name" value="MiaB/RimO family radical SAM methylthiotransferase"/>
    <property type="match status" value="1"/>
</dbReference>
<dbReference type="PANTHER" id="PTHR43837">
    <property type="entry name" value="RIBOSOMAL PROTEIN S12 METHYLTHIOTRANSFERASE RIMO"/>
    <property type="match status" value="1"/>
</dbReference>
<dbReference type="PANTHER" id="PTHR43837:SF1">
    <property type="entry name" value="RIBOSOMAL PROTEIN US12 METHYLTHIOTRANSFERASE RIMO"/>
    <property type="match status" value="1"/>
</dbReference>
<dbReference type="Pfam" id="PF04055">
    <property type="entry name" value="Radical_SAM"/>
    <property type="match status" value="1"/>
</dbReference>
<dbReference type="Pfam" id="PF18693">
    <property type="entry name" value="TRAM_2"/>
    <property type="match status" value="1"/>
</dbReference>
<dbReference type="Pfam" id="PF00919">
    <property type="entry name" value="UPF0004"/>
    <property type="match status" value="1"/>
</dbReference>
<dbReference type="SFLD" id="SFLDG01082">
    <property type="entry name" value="B12-binding_domain_containing"/>
    <property type="match status" value="1"/>
</dbReference>
<dbReference type="SFLD" id="SFLDS00029">
    <property type="entry name" value="Radical_SAM"/>
    <property type="match status" value="1"/>
</dbReference>
<dbReference type="SFLD" id="SFLDF00274">
    <property type="entry name" value="ribosomal_protein_S12_methylth"/>
    <property type="match status" value="1"/>
</dbReference>
<dbReference type="SMART" id="SM00729">
    <property type="entry name" value="Elp3"/>
    <property type="match status" value="1"/>
</dbReference>
<dbReference type="SUPFAM" id="SSF102114">
    <property type="entry name" value="Radical SAM enzymes"/>
    <property type="match status" value="1"/>
</dbReference>
<dbReference type="PROSITE" id="PS51449">
    <property type="entry name" value="MTTASE_N"/>
    <property type="match status" value="1"/>
</dbReference>
<dbReference type="PROSITE" id="PS01278">
    <property type="entry name" value="MTTASE_RADICAL"/>
    <property type="match status" value="1"/>
</dbReference>
<dbReference type="PROSITE" id="PS51918">
    <property type="entry name" value="RADICAL_SAM"/>
    <property type="match status" value="1"/>
</dbReference>
<dbReference type="PROSITE" id="PS50926">
    <property type="entry name" value="TRAM"/>
    <property type="match status" value="1"/>
</dbReference>
<accession>B7MQT8</accession>
<keyword id="KW-0004">4Fe-4S</keyword>
<keyword id="KW-0963">Cytoplasm</keyword>
<keyword id="KW-0408">Iron</keyword>
<keyword id="KW-0411">Iron-sulfur</keyword>
<keyword id="KW-0479">Metal-binding</keyword>
<keyword id="KW-0949">S-adenosyl-L-methionine</keyword>
<keyword id="KW-0808">Transferase</keyword>
<reference key="1">
    <citation type="journal article" date="2009" name="PLoS Genet.">
        <title>Organised genome dynamics in the Escherichia coli species results in highly diverse adaptive paths.</title>
        <authorList>
            <person name="Touchon M."/>
            <person name="Hoede C."/>
            <person name="Tenaillon O."/>
            <person name="Barbe V."/>
            <person name="Baeriswyl S."/>
            <person name="Bidet P."/>
            <person name="Bingen E."/>
            <person name="Bonacorsi S."/>
            <person name="Bouchier C."/>
            <person name="Bouvet O."/>
            <person name="Calteau A."/>
            <person name="Chiapello H."/>
            <person name="Clermont O."/>
            <person name="Cruveiller S."/>
            <person name="Danchin A."/>
            <person name="Diard M."/>
            <person name="Dossat C."/>
            <person name="Karoui M.E."/>
            <person name="Frapy E."/>
            <person name="Garry L."/>
            <person name="Ghigo J.M."/>
            <person name="Gilles A.M."/>
            <person name="Johnson J."/>
            <person name="Le Bouguenec C."/>
            <person name="Lescat M."/>
            <person name="Mangenot S."/>
            <person name="Martinez-Jehanne V."/>
            <person name="Matic I."/>
            <person name="Nassif X."/>
            <person name="Oztas S."/>
            <person name="Petit M.A."/>
            <person name="Pichon C."/>
            <person name="Rouy Z."/>
            <person name="Ruf C.S."/>
            <person name="Schneider D."/>
            <person name="Tourret J."/>
            <person name="Vacherie B."/>
            <person name="Vallenet D."/>
            <person name="Medigue C."/>
            <person name="Rocha E.P.C."/>
            <person name="Denamur E."/>
        </authorList>
    </citation>
    <scope>NUCLEOTIDE SEQUENCE [LARGE SCALE GENOMIC DNA]</scope>
    <source>
        <strain>ED1a</strain>
    </source>
</reference>
<comment type="function">
    <text evidence="1">Catalyzes the methylthiolation of an aspartic acid residue of ribosomal protein uS12.</text>
</comment>
<comment type="catalytic activity">
    <reaction evidence="1">
        <text>L-aspartate(89)-[ribosomal protein uS12]-hydrogen + (sulfur carrier)-SH + AH2 + 2 S-adenosyl-L-methionine = 3-methylsulfanyl-L-aspartate(89)-[ribosomal protein uS12]-hydrogen + (sulfur carrier)-H + 5'-deoxyadenosine + L-methionine + A + S-adenosyl-L-homocysteine + 2 H(+)</text>
        <dbReference type="Rhea" id="RHEA:37087"/>
        <dbReference type="Rhea" id="RHEA-COMP:10460"/>
        <dbReference type="Rhea" id="RHEA-COMP:10461"/>
        <dbReference type="Rhea" id="RHEA-COMP:14737"/>
        <dbReference type="Rhea" id="RHEA-COMP:14739"/>
        <dbReference type="ChEBI" id="CHEBI:13193"/>
        <dbReference type="ChEBI" id="CHEBI:15378"/>
        <dbReference type="ChEBI" id="CHEBI:17319"/>
        <dbReference type="ChEBI" id="CHEBI:17499"/>
        <dbReference type="ChEBI" id="CHEBI:29917"/>
        <dbReference type="ChEBI" id="CHEBI:29961"/>
        <dbReference type="ChEBI" id="CHEBI:57844"/>
        <dbReference type="ChEBI" id="CHEBI:57856"/>
        <dbReference type="ChEBI" id="CHEBI:59789"/>
        <dbReference type="ChEBI" id="CHEBI:64428"/>
        <dbReference type="ChEBI" id="CHEBI:73599"/>
        <dbReference type="EC" id="2.8.4.4"/>
    </reaction>
</comment>
<comment type="cofactor">
    <cofactor evidence="1">
        <name>[4Fe-4S] cluster</name>
        <dbReference type="ChEBI" id="CHEBI:49883"/>
    </cofactor>
    <text evidence="1">Binds 2 [4Fe-4S] clusters. One cluster is coordinated with 3 cysteines and an exchangeable S-adenosyl-L-methionine.</text>
</comment>
<comment type="subcellular location">
    <subcellularLocation>
        <location evidence="1">Cytoplasm</location>
    </subcellularLocation>
</comment>
<comment type="similarity">
    <text evidence="1">Belongs to the methylthiotransferase family. RimO subfamily.</text>
</comment>
<feature type="chain" id="PRO_0000374831" description="Ribosomal protein uS12 methylthiotransferase RimO">
    <location>
        <begin position="1"/>
        <end position="441"/>
    </location>
</feature>
<feature type="domain" description="MTTase N-terminal" evidence="1">
    <location>
        <begin position="8"/>
        <end position="118"/>
    </location>
</feature>
<feature type="domain" description="Radical SAM core" evidence="2">
    <location>
        <begin position="136"/>
        <end position="373"/>
    </location>
</feature>
<feature type="domain" description="TRAM" evidence="1">
    <location>
        <begin position="376"/>
        <end position="441"/>
    </location>
</feature>
<feature type="binding site" evidence="1">
    <location>
        <position position="17"/>
    </location>
    <ligand>
        <name>[4Fe-4S] cluster</name>
        <dbReference type="ChEBI" id="CHEBI:49883"/>
        <label>1</label>
    </ligand>
</feature>
<feature type="binding site" evidence="1">
    <location>
        <position position="53"/>
    </location>
    <ligand>
        <name>[4Fe-4S] cluster</name>
        <dbReference type="ChEBI" id="CHEBI:49883"/>
        <label>1</label>
    </ligand>
</feature>
<feature type="binding site" evidence="1">
    <location>
        <position position="82"/>
    </location>
    <ligand>
        <name>[4Fe-4S] cluster</name>
        <dbReference type="ChEBI" id="CHEBI:49883"/>
        <label>1</label>
    </ligand>
</feature>
<feature type="binding site" evidence="1">
    <location>
        <position position="150"/>
    </location>
    <ligand>
        <name>[4Fe-4S] cluster</name>
        <dbReference type="ChEBI" id="CHEBI:49883"/>
        <label>2</label>
        <note>4Fe-4S-S-AdoMet</note>
    </ligand>
</feature>
<feature type="binding site" evidence="1">
    <location>
        <position position="154"/>
    </location>
    <ligand>
        <name>[4Fe-4S] cluster</name>
        <dbReference type="ChEBI" id="CHEBI:49883"/>
        <label>2</label>
        <note>4Fe-4S-S-AdoMet</note>
    </ligand>
</feature>
<feature type="binding site" evidence="1">
    <location>
        <position position="157"/>
    </location>
    <ligand>
        <name>[4Fe-4S] cluster</name>
        <dbReference type="ChEBI" id="CHEBI:49883"/>
        <label>2</label>
        <note>4Fe-4S-S-AdoMet</note>
    </ligand>
</feature>
<proteinExistence type="inferred from homology"/>